<proteinExistence type="inferred from homology"/>
<keyword id="KW-0694">RNA-binding</keyword>
<keyword id="KW-0804">Transcription</keyword>
<keyword id="KW-0889">Transcription antitermination</keyword>
<keyword id="KW-0805">Transcription regulation</keyword>
<organism>
    <name type="scientific">Nitrosomonas eutropha (strain DSM 101675 / C91 / Nm57)</name>
    <dbReference type="NCBI Taxonomy" id="335283"/>
    <lineage>
        <taxon>Bacteria</taxon>
        <taxon>Pseudomonadati</taxon>
        <taxon>Pseudomonadota</taxon>
        <taxon>Betaproteobacteria</taxon>
        <taxon>Nitrosomonadales</taxon>
        <taxon>Nitrosomonadaceae</taxon>
        <taxon>Nitrosomonas</taxon>
    </lineage>
</organism>
<dbReference type="EMBL" id="CP000450">
    <property type="protein sequence ID" value="ABI60722.1"/>
    <property type="molecule type" value="Genomic_DNA"/>
</dbReference>
<dbReference type="RefSeq" id="WP_011635478.1">
    <property type="nucleotide sequence ID" value="NC_008344.1"/>
</dbReference>
<dbReference type="SMR" id="Q0AD60"/>
<dbReference type="STRING" id="335283.Neut_2518"/>
<dbReference type="KEGG" id="net:Neut_2518"/>
<dbReference type="eggNOG" id="COG0781">
    <property type="taxonomic scope" value="Bacteria"/>
</dbReference>
<dbReference type="HOGENOM" id="CLU_087843_4_1_4"/>
<dbReference type="OrthoDB" id="9789556at2"/>
<dbReference type="Proteomes" id="UP000001966">
    <property type="component" value="Chromosome"/>
</dbReference>
<dbReference type="GO" id="GO:0005829">
    <property type="term" value="C:cytosol"/>
    <property type="evidence" value="ECO:0007669"/>
    <property type="project" value="TreeGrafter"/>
</dbReference>
<dbReference type="GO" id="GO:0003723">
    <property type="term" value="F:RNA binding"/>
    <property type="evidence" value="ECO:0007669"/>
    <property type="project" value="UniProtKB-UniRule"/>
</dbReference>
<dbReference type="GO" id="GO:0006353">
    <property type="term" value="P:DNA-templated transcription termination"/>
    <property type="evidence" value="ECO:0007669"/>
    <property type="project" value="UniProtKB-UniRule"/>
</dbReference>
<dbReference type="GO" id="GO:0031564">
    <property type="term" value="P:transcription antitermination"/>
    <property type="evidence" value="ECO:0007669"/>
    <property type="project" value="UniProtKB-KW"/>
</dbReference>
<dbReference type="Gene3D" id="1.10.940.10">
    <property type="entry name" value="NusB-like"/>
    <property type="match status" value="1"/>
</dbReference>
<dbReference type="HAMAP" id="MF_00073">
    <property type="entry name" value="NusB"/>
    <property type="match status" value="1"/>
</dbReference>
<dbReference type="InterPro" id="IPR035926">
    <property type="entry name" value="NusB-like_sf"/>
</dbReference>
<dbReference type="InterPro" id="IPR011605">
    <property type="entry name" value="NusB_fam"/>
</dbReference>
<dbReference type="InterPro" id="IPR006027">
    <property type="entry name" value="NusB_RsmB_TIM44"/>
</dbReference>
<dbReference type="NCBIfam" id="TIGR01951">
    <property type="entry name" value="nusB"/>
    <property type="match status" value="1"/>
</dbReference>
<dbReference type="PANTHER" id="PTHR11078:SF3">
    <property type="entry name" value="ANTITERMINATION NUSB DOMAIN-CONTAINING PROTEIN"/>
    <property type="match status" value="1"/>
</dbReference>
<dbReference type="PANTHER" id="PTHR11078">
    <property type="entry name" value="N UTILIZATION SUBSTANCE PROTEIN B-RELATED"/>
    <property type="match status" value="1"/>
</dbReference>
<dbReference type="Pfam" id="PF01029">
    <property type="entry name" value="NusB"/>
    <property type="match status" value="1"/>
</dbReference>
<dbReference type="SUPFAM" id="SSF48013">
    <property type="entry name" value="NusB-like"/>
    <property type="match status" value="1"/>
</dbReference>
<evidence type="ECO:0000255" key="1">
    <source>
        <dbReference type="HAMAP-Rule" id="MF_00073"/>
    </source>
</evidence>
<evidence type="ECO:0000256" key="2">
    <source>
        <dbReference type="SAM" id="MobiDB-lite"/>
    </source>
</evidence>
<feature type="chain" id="PRO_1000023755" description="Transcription antitermination protein NusB">
    <location>
        <begin position="1"/>
        <end position="167"/>
    </location>
</feature>
<feature type="region of interest" description="Disordered" evidence="2">
    <location>
        <begin position="1"/>
        <end position="21"/>
    </location>
</feature>
<name>NUSB_NITEC</name>
<sequence length="167" mass="18664">MIPTDTAPPSKPAQGHKGYKNRRRLSRELALQGIYQWRLAGGNAQEIDLQLQQVNFYSKADGSYFSDLLQGVLEHSRDLEAQIQAYLDRQLAELSPVECSILLIGTYEMVHHPEIPCRAIINEAIELAKSYGGTDGHKYVNGVLDKLAAQLRAVELQSSPVRNKDPH</sequence>
<reference key="1">
    <citation type="journal article" date="2007" name="Environ. Microbiol.">
        <title>Whole-genome analysis of the ammonia-oxidizing bacterium, Nitrosomonas eutropha C91: implications for niche adaptation.</title>
        <authorList>
            <person name="Stein L.Y."/>
            <person name="Arp D.J."/>
            <person name="Berube P.M."/>
            <person name="Chain P.S."/>
            <person name="Hauser L."/>
            <person name="Jetten M.S."/>
            <person name="Klotz M.G."/>
            <person name="Larimer F.W."/>
            <person name="Norton J.M."/>
            <person name="Op den Camp H.J.M."/>
            <person name="Shin M."/>
            <person name="Wei X."/>
        </authorList>
    </citation>
    <scope>NUCLEOTIDE SEQUENCE [LARGE SCALE GENOMIC DNA]</scope>
    <source>
        <strain>DSM 101675 / C91 / Nm57</strain>
    </source>
</reference>
<accession>Q0AD60</accession>
<gene>
    <name evidence="1" type="primary">nusB</name>
    <name type="ordered locus">Neut_2518</name>
</gene>
<comment type="function">
    <text evidence="1">Involved in transcription antitermination. Required for transcription of ribosomal RNA (rRNA) genes. Binds specifically to the boxA antiterminator sequence of the ribosomal RNA (rrn) operons.</text>
</comment>
<comment type="similarity">
    <text evidence="1">Belongs to the NusB family.</text>
</comment>
<protein>
    <recommendedName>
        <fullName evidence="1">Transcription antitermination protein NusB</fullName>
    </recommendedName>
    <alternativeName>
        <fullName evidence="1">Antitermination factor NusB</fullName>
    </alternativeName>
</protein>